<evidence type="ECO:0000250" key="1"/>
<evidence type="ECO:0000250" key="2">
    <source>
        <dbReference type="UniProtKB" id="O95718"/>
    </source>
</evidence>
<evidence type="ECO:0000250" key="3">
    <source>
        <dbReference type="UniProtKB" id="Q61539"/>
    </source>
</evidence>
<evidence type="ECO:0000255" key="4">
    <source>
        <dbReference type="PROSITE-ProRule" id="PRU00407"/>
    </source>
</evidence>
<evidence type="ECO:0000255" key="5">
    <source>
        <dbReference type="PROSITE-ProRule" id="PRU01189"/>
    </source>
</evidence>
<evidence type="ECO:0000256" key="6">
    <source>
        <dbReference type="SAM" id="MobiDB-lite"/>
    </source>
</evidence>
<evidence type="ECO:0000305" key="7"/>
<evidence type="ECO:0000305" key="8">
    <source>
    </source>
</evidence>
<evidence type="ECO:0000305" key="9">
    <source>
    </source>
</evidence>
<evidence type="ECO:0000312" key="10">
    <source>
        <dbReference type="RGD" id="1359557"/>
    </source>
</evidence>
<accession>P11475</accession>
<accession>Q5QJB1</accession>
<proteinExistence type="evidence at transcript level"/>
<comment type="function">
    <text evidence="2 3">Transcription factor that binds a canonical ESRRB recognition (ERRE) sequence 5'TCAAGGTCA-3' localized on promoter and enhancer of targets genes regulating their expression or their transcription activity (By similarity). Plays a role, in a LIF independent manner, in maintainance of self-renewal and pluripotency of embryonic and trophoblast stem cells through different signaling pathways including FGF signaling pathway and Wnt signaling pathways. Involved in morula development (2-16 cells embryos) by acting as a regulator at the 8-cell stage (By similarity). Upon FGF signaling pathway activation, interacts with KDM1A by directly binding to enhancer site of ELF5 and EOMES and activating their transcription leading to self-renewal of trophoblast stem cells. Also regulates expression of multiple rod-specific genes and is required for survival of this cell type (By similarity). Plays a role as transcription factor activator of GATA6, NR0B1, POU5F1 and PERM1 (By similarity). Plays a role as transcription factor repressor of NFE2L2 transcriptional activity and ESR1 transcriptional activity (By similarity). During mitosis remains bound to a subset of interphase target genes, including pluripotency regulators, through the canonical ESRRB recognition (ERRE) sequence, leading to their transcriptional activation in early G1 phase. Can coassemble on structured DNA elements with other transcription factors like SOX2, POU5F1, KDM1A and NCOA3 to trigger ESRRB-dependent gene activation. This mechanism, in the case of SOX2 corecruitment prevents the embryonic stem cells (ESCs) to epiblast stem cells (EpiSC) transition through positive regulation of NR0B1 that inhibits the EpiSC transcriptional program. Also plays a role inner ear development by controlling expression of ion channels and transporters and in early placentation (By similarity).</text>
</comment>
<comment type="subunit">
    <text evidence="2 3">Binds DNA as a monomer (By similarity). Interacts with NR0B1; represses ESRRB activity at the GATA6 promoter. Interacts with NANOG; reciprocally modulates their transcriptional activities and activates POU5F1 expression. Interacts with NCOA3; mediates the interaction between ESRRB and RNA polymerase II complexes and allows NCOA3 corecruitment to ESRRB, KLF4, NANOG, and SOX2 enhancer regions to trigger ESRRB-dependent gene activation involved in self-renewal and pluripotency. Interacts with KDM1A; co-occupes the core set of ESRRB targets including ELF5 and EOMES. Interacts with the multiprotein complex Integrator, at least composed of INTS1, INTS2, INTS3, INTS4, INTS5, INTS6, INTS7, INTS8, INTS9/RC74, INTS10, INTS11/CPSF3L and INTS12; ESRRB is probably not a core component of the integrator complex and associates to integrator via its interaction with INTS1 and INTS9; attracts the transcriptional machinery. Interacts with JARID2. Interacts with POU5F1; recruits ESRRB near the POU5F1-SOX2 element in the NANOG proximal promoter leading to activation of NANOG expression; the interaction is DNA independent (By similarity).</text>
</comment>
<comment type="subcellular location">
    <subcellularLocation>
        <location evidence="3">Nucleus</location>
    </subcellularLocation>
    <subcellularLocation>
        <location evidence="3">Cytoplasm</location>
    </subcellularLocation>
    <subcellularLocation>
        <location evidence="3">Chromosome</location>
    </subcellularLocation>
</comment>
<comment type="PTM">
    <text evidence="2">Acetylated by PCAF/KAT2 (in vitro).</text>
</comment>
<comment type="similarity">
    <text evidence="7">Belongs to the nuclear hormone receptor family. NR3 subfamily.</text>
</comment>
<comment type="caution">
    <text evidence="8 9">Was originally (PubMed:3267207) thought to originate from human but was later shown (PubMed:10072763) to be derived from rat.</text>
</comment>
<dbReference type="EMBL" id="X51417">
    <property type="protein sequence ID" value="CAA35779.1"/>
    <property type="molecule type" value="mRNA"/>
</dbReference>
<dbReference type="EMBL" id="AY383731">
    <property type="protein sequence ID" value="AAR89824.1"/>
    <property type="molecule type" value="mRNA"/>
</dbReference>
<dbReference type="RefSeq" id="NP_001008516.2">
    <property type="nucleotide sequence ID" value="NM_001008516.2"/>
</dbReference>
<dbReference type="BMRB" id="P11475"/>
<dbReference type="SMR" id="P11475"/>
<dbReference type="FunCoup" id="P11475">
    <property type="interactions" value="112"/>
</dbReference>
<dbReference type="STRING" id="10116.ENSRNOP00000013867"/>
<dbReference type="PhosphoSitePlus" id="P11475"/>
<dbReference type="PaxDb" id="10116-ENSRNOP00000013867"/>
<dbReference type="GeneID" id="299210"/>
<dbReference type="KEGG" id="rno:299210"/>
<dbReference type="UCSC" id="RGD:1359557">
    <property type="organism name" value="rat"/>
</dbReference>
<dbReference type="AGR" id="RGD:1359557"/>
<dbReference type="CTD" id="2103"/>
<dbReference type="RGD" id="1359557">
    <property type="gene designation" value="Esrrb"/>
</dbReference>
<dbReference type="VEuPathDB" id="HostDB:ENSRNOG00000010259"/>
<dbReference type="eggNOG" id="KOG3575">
    <property type="taxonomic scope" value="Eukaryota"/>
</dbReference>
<dbReference type="HOGENOM" id="CLU_007368_11_0_1"/>
<dbReference type="InParanoid" id="P11475"/>
<dbReference type="PhylomeDB" id="P11475"/>
<dbReference type="TreeFam" id="TF323751"/>
<dbReference type="Reactome" id="R-RNO-383280">
    <property type="pathway name" value="Nuclear Receptor transcription pathway"/>
</dbReference>
<dbReference type="PRO" id="PR:P11475"/>
<dbReference type="Proteomes" id="UP000002494">
    <property type="component" value="Chromosome 6"/>
</dbReference>
<dbReference type="Bgee" id="ENSRNOG00000010259">
    <property type="expression patterns" value="Expressed in stomach and 7 other cell types or tissues"/>
</dbReference>
<dbReference type="GO" id="GO:0000785">
    <property type="term" value="C:chromatin"/>
    <property type="evidence" value="ECO:0000318"/>
    <property type="project" value="GO_Central"/>
</dbReference>
<dbReference type="GO" id="GO:0000793">
    <property type="term" value="C:condensed chromosome"/>
    <property type="evidence" value="ECO:0000250"/>
    <property type="project" value="UniProtKB"/>
</dbReference>
<dbReference type="GO" id="GO:0005737">
    <property type="term" value="C:cytoplasm"/>
    <property type="evidence" value="ECO:0000250"/>
    <property type="project" value="UniProtKB"/>
</dbReference>
<dbReference type="GO" id="GO:0032039">
    <property type="term" value="C:integrator complex"/>
    <property type="evidence" value="ECO:0000266"/>
    <property type="project" value="RGD"/>
</dbReference>
<dbReference type="GO" id="GO:0005634">
    <property type="term" value="C:nucleus"/>
    <property type="evidence" value="ECO:0000250"/>
    <property type="project" value="UniProtKB"/>
</dbReference>
<dbReference type="GO" id="GO:0000987">
    <property type="term" value="F:cis-regulatory region sequence-specific DNA binding"/>
    <property type="evidence" value="ECO:0000250"/>
    <property type="project" value="UniProtKB"/>
</dbReference>
<dbReference type="GO" id="GO:0001228">
    <property type="term" value="F:DNA-binding transcription activator activity, RNA polymerase II-specific"/>
    <property type="evidence" value="ECO:0000250"/>
    <property type="project" value="UniProtKB"/>
</dbReference>
<dbReference type="GO" id="GO:0003700">
    <property type="term" value="F:DNA-binding transcription factor activity"/>
    <property type="evidence" value="ECO:0000250"/>
    <property type="project" value="UniProtKB"/>
</dbReference>
<dbReference type="GO" id="GO:0000981">
    <property type="term" value="F:DNA-binding transcription factor activity, RNA polymerase II-specific"/>
    <property type="evidence" value="ECO:0000250"/>
    <property type="project" value="UniProtKB"/>
</dbReference>
<dbReference type="GO" id="GO:0034056">
    <property type="term" value="F:estrogen response element binding"/>
    <property type="evidence" value="ECO:0000318"/>
    <property type="project" value="GO_Central"/>
</dbReference>
<dbReference type="GO" id="GO:0004879">
    <property type="term" value="F:nuclear receptor activity"/>
    <property type="evidence" value="ECO:0000250"/>
    <property type="project" value="UniProtKB"/>
</dbReference>
<dbReference type="GO" id="GO:0003707">
    <property type="term" value="F:nuclear steroid receptor activity"/>
    <property type="evidence" value="ECO:0007669"/>
    <property type="project" value="InterPro"/>
</dbReference>
<dbReference type="GO" id="GO:0000978">
    <property type="term" value="F:RNA polymerase II cis-regulatory region sequence-specific DNA binding"/>
    <property type="evidence" value="ECO:0000250"/>
    <property type="project" value="UniProtKB"/>
</dbReference>
<dbReference type="GO" id="GO:0000993">
    <property type="term" value="F:RNA polymerase II complex binding"/>
    <property type="evidence" value="ECO:0000250"/>
    <property type="project" value="UniProtKB"/>
</dbReference>
<dbReference type="GO" id="GO:0061629">
    <property type="term" value="F:RNA polymerase II-specific DNA-binding transcription factor binding"/>
    <property type="evidence" value="ECO:0000266"/>
    <property type="project" value="RGD"/>
</dbReference>
<dbReference type="GO" id="GO:0043565">
    <property type="term" value="F:sequence-specific DNA binding"/>
    <property type="evidence" value="ECO:0000250"/>
    <property type="project" value="UniProtKB"/>
</dbReference>
<dbReference type="GO" id="GO:1990837">
    <property type="term" value="F:sequence-specific double-stranded DNA binding"/>
    <property type="evidence" value="ECO:0000266"/>
    <property type="project" value="RGD"/>
</dbReference>
<dbReference type="GO" id="GO:0005496">
    <property type="term" value="F:steroid binding"/>
    <property type="evidence" value="ECO:0007669"/>
    <property type="project" value="InterPro"/>
</dbReference>
<dbReference type="GO" id="GO:0008270">
    <property type="term" value="F:zinc ion binding"/>
    <property type="evidence" value="ECO:0007669"/>
    <property type="project" value="UniProtKB-KW"/>
</dbReference>
<dbReference type="GO" id="GO:0043697">
    <property type="term" value="P:cell dedifferentiation"/>
    <property type="evidence" value="ECO:0000250"/>
    <property type="project" value="UniProtKB"/>
</dbReference>
<dbReference type="GO" id="GO:0008283">
    <property type="term" value="P:cell population proliferation"/>
    <property type="evidence" value="ECO:0000250"/>
    <property type="project" value="UniProtKB"/>
</dbReference>
<dbReference type="GO" id="GO:0001892">
    <property type="term" value="P:embryonic placenta development"/>
    <property type="evidence" value="ECO:0000266"/>
    <property type="project" value="RGD"/>
</dbReference>
<dbReference type="GO" id="GO:0001701">
    <property type="term" value="P:in utero embryonic development"/>
    <property type="evidence" value="ECO:0000266"/>
    <property type="project" value="RGD"/>
</dbReference>
<dbReference type="GO" id="GO:0048839">
    <property type="term" value="P:inner ear development"/>
    <property type="evidence" value="ECO:0000250"/>
    <property type="project" value="UniProtKB"/>
</dbReference>
<dbReference type="GO" id="GO:0140001">
    <property type="term" value="P:morula formation"/>
    <property type="evidence" value="ECO:0000250"/>
    <property type="project" value="UniProtKB"/>
</dbReference>
<dbReference type="GO" id="GO:0045892">
    <property type="term" value="P:negative regulation of DNA-templated transcription"/>
    <property type="evidence" value="ECO:0000250"/>
    <property type="project" value="UniProtKB"/>
</dbReference>
<dbReference type="GO" id="GO:2000737">
    <property type="term" value="P:negative regulation of stem cell differentiation"/>
    <property type="evidence" value="ECO:0000250"/>
    <property type="project" value="UniProtKB"/>
</dbReference>
<dbReference type="GO" id="GO:0045494">
    <property type="term" value="P:photoreceptor cell maintenance"/>
    <property type="evidence" value="ECO:0000250"/>
    <property type="project" value="UniProtKB"/>
</dbReference>
<dbReference type="GO" id="GO:0045893">
    <property type="term" value="P:positive regulation of DNA-templated transcription"/>
    <property type="evidence" value="ECO:0000250"/>
    <property type="project" value="UniProtKB"/>
</dbReference>
<dbReference type="GO" id="GO:0045725">
    <property type="term" value="P:positive regulation of glycogen biosynthetic process"/>
    <property type="evidence" value="ECO:0000314"/>
    <property type="project" value="BHF-UCL"/>
</dbReference>
<dbReference type="GO" id="GO:0045821">
    <property type="term" value="P:positive regulation of glycolytic process"/>
    <property type="evidence" value="ECO:0000314"/>
    <property type="project" value="BHF-UCL"/>
</dbReference>
<dbReference type="GO" id="GO:1902459">
    <property type="term" value="P:positive regulation of stem cell population maintenance"/>
    <property type="evidence" value="ECO:0000250"/>
    <property type="project" value="UniProtKB"/>
</dbReference>
<dbReference type="GO" id="GO:0045944">
    <property type="term" value="P:positive regulation of transcription by RNA polymerase II"/>
    <property type="evidence" value="ECO:0000250"/>
    <property type="project" value="UniProtKB"/>
</dbReference>
<dbReference type="GO" id="GO:0006355">
    <property type="term" value="P:regulation of DNA-templated transcription"/>
    <property type="evidence" value="ECO:0000250"/>
    <property type="project" value="UniProtKB"/>
</dbReference>
<dbReference type="GO" id="GO:2000035">
    <property type="term" value="P:regulation of stem cell division"/>
    <property type="evidence" value="ECO:0000250"/>
    <property type="project" value="UniProtKB"/>
</dbReference>
<dbReference type="GO" id="GO:0006357">
    <property type="term" value="P:regulation of transcription by RNA polymerase II"/>
    <property type="evidence" value="ECO:0000318"/>
    <property type="project" value="GO_Central"/>
</dbReference>
<dbReference type="GO" id="GO:0035019">
    <property type="term" value="P:somatic stem cell population maintenance"/>
    <property type="evidence" value="ECO:0000250"/>
    <property type="project" value="UniProtKB"/>
</dbReference>
<dbReference type="GO" id="GO:0017145">
    <property type="term" value="P:stem cell division"/>
    <property type="evidence" value="ECO:0000250"/>
    <property type="project" value="UniProtKB"/>
</dbReference>
<dbReference type="GO" id="GO:0019827">
    <property type="term" value="P:stem cell population maintenance"/>
    <property type="evidence" value="ECO:0000250"/>
    <property type="project" value="UniProtKB"/>
</dbReference>
<dbReference type="GO" id="GO:0001834">
    <property type="term" value="P:trophectodermal cell proliferation"/>
    <property type="evidence" value="ECO:0000266"/>
    <property type="project" value="RGD"/>
</dbReference>
<dbReference type="GO" id="GO:0001831">
    <property type="term" value="P:trophectodermal cellular morphogenesis"/>
    <property type="evidence" value="ECO:0000266"/>
    <property type="project" value="RGD"/>
</dbReference>
<dbReference type="CDD" id="cd07170">
    <property type="entry name" value="NR_DBD_ERR"/>
    <property type="match status" value="1"/>
</dbReference>
<dbReference type="CDD" id="cd06946">
    <property type="entry name" value="NR_LBD_ERR"/>
    <property type="match status" value="1"/>
</dbReference>
<dbReference type="FunFam" id="1.10.565.10:FF:000009">
    <property type="entry name" value="estrogen-related receptor gamma isoform X1"/>
    <property type="match status" value="1"/>
</dbReference>
<dbReference type="FunFam" id="3.30.50.10:FF:000008">
    <property type="entry name" value="estrogen-related receptor gamma isoform X1"/>
    <property type="match status" value="1"/>
</dbReference>
<dbReference type="Gene3D" id="3.30.50.10">
    <property type="entry name" value="Erythroid Transcription Factor GATA-1, subunit A"/>
    <property type="match status" value="1"/>
</dbReference>
<dbReference type="Gene3D" id="1.10.565.10">
    <property type="entry name" value="Retinoid X Receptor"/>
    <property type="match status" value="1"/>
</dbReference>
<dbReference type="InterPro" id="IPR024178">
    <property type="entry name" value="Est_rcpt/est-rel_rcp"/>
</dbReference>
<dbReference type="InterPro" id="IPR035500">
    <property type="entry name" value="NHR-like_dom_sf"/>
</dbReference>
<dbReference type="InterPro" id="IPR000536">
    <property type="entry name" value="Nucl_hrmn_rcpt_lig-bd"/>
</dbReference>
<dbReference type="InterPro" id="IPR050200">
    <property type="entry name" value="Nuclear_hormone_rcpt_NR3"/>
</dbReference>
<dbReference type="InterPro" id="IPR001723">
    <property type="entry name" value="Nuclear_hrmn_rcpt"/>
</dbReference>
<dbReference type="InterPro" id="IPR027289">
    <property type="entry name" value="Oest-rel_rcp"/>
</dbReference>
<dbReference type="InterPro" id="IPR001628">
    <property type="entry name" value="Znf_hrmn_rcpt"/>
</dbReference>
<dbReference type="InterPro" id="IPR013088">
    <property type="entry name" value="Znf_NHR/GATA"/>
</dbReference>
<dbReference type="PANTHER" id="PTHR48092">
    <property type="entry name" value="KNIRPS-RELATED PROTEIN-RELATED"/>
    <property type="match status" value="1"/>
</dbReference>
<dbReference type="Pfam" id="PF00104">
    <property type="entry name" value="Hormone_recep"/>
    <property type="match status" value="1"/>
</dbReference>
<dbReference type="Pfam" id="PF00105">
    <property type="entry name" value="zf-C4"/>
    <property type="match status" value="1"/>
</dbReference>
<dbReference type="PIRSF" id="PIRSF002527">
    <property type="entry name" value="ER-like_NR"/>
    <property type="match status" value="1"/>
</dbReference>
<dbReference type="PIRSF" id="PIRSF500939">
    <property type="entry name" value="ERR1-2-3"/>
    <property type="match status" value="1"/>
</dbReference>
<dbReference type="PRINTS" id="PR00398">
    <property type="entry name" value="STRDHORMONER"/>
</dbReference>
<dbReference type="PRINTS" id="PR00047">
    <property type="entry name" value="STROIDFINGER"/>
</dbReference>
<dbReference type="SMART" id="SM00430">
    <property type="entry name" value="HOLI"/>
    <property type="match status" value="1"/>
</dbReference>
<dbReference type="SMART" id="SM00399">
    <property type="entry name" value="ZnF_C4"/>
    <property type="match status" value="1"/>
</dbReference>
<dbReference type="SUPFAM" id="SSF57716">
    <property type="entry name" value="Glucocorticoid receptor-like (DNA-binding domain)"/>
    <property type="match status" value="1"/>
</dbReference>
<dbReference type="SUPFAM" id="SSF48508">
    <property type="entry name" value="Nuclear receptor ligand-binding domain"/>
    <property type="match status" value="1"/>
</dbReference>
<dbReference type="PROSITE" id="PS51843">
    <property type="entry name" value="NR_LBD"/>
    <property type="match status" value="1"/>
</dbReference>
<dbReference type="PROSITE" id="PS00031">
    <property type="entry name" value="NUCLEAR_REC_DBD_1"/>
    <property type="match status" value="1"/>
</dbReference>
<dbReference type="PROSITE" id="PS51030">
    <property type="entry name" value="NUCLEAR_REC_DBD_2"/>
    <property type="match status" value="1"/>
</dbReference>
<organism>
    <name type="scientific">Rattus norvegicus</name>
    <name type="common">Rat</name>
    <dbReference type="NCBI Taxonomy" id="10116"/>
    <lineage>
        <taxon>Eukaryota</taxon>
        <taxon>Metazoa</taxon>
        <taxon>Chordata</taxon>
        <taxon>Craniata</taxon>
        <taxon>Vertebrata</taxon>
        <taxon>Euteleostomi</taxon>
        <taxon>Mammalia</taxon>
        <taxon>Eutheria</taxon>
        <taxon>Euarchontoglires</taxon>
        <taxon>Glires</taxon>
        <taxon>Rodentia</taxon>
        <taxon>Myomorpha</taxon>
        <taxon>Muroidea</taxon>
        <taxon>Muridae</taxon>
        <taxon>Murinae</taxon>
        <taxon>Rattus</taxon>
    </lineage>
</organism>
<protein>
    <recommendedName>
        <fullName evidence="7">Steroid hormone receptor ERR2</fullName>
    </recommendedName>
    <alternativeName>
        <fullName>Estrogen receptor-like 2</fullName>
    </alternativeName>
    <alternativeName>
        <fullName evidence="2">Estrogen-related receptor beta</fullName>
        <shortName>ERR-beta</shortName>
    </alternativeName>
    <alternativeName>
        <fullName>Nuclear receptor subfamily 3 group B member 2</fullName>
    </alternativeName>
</protein>
<reference key="1">
    <citation type="journal article" date="1988" name="Nature">
        <title>Identification of a new class of steroid hormone receptors.</title>
        <authorList>
            <person name="Giguere V."/>
            <person name="Yang N."/>
            <person name="Segui P."/>
            <person name="Evans R.M."/>
        </authorList>
    </citation>
    <scope>NUCLEOTIDE SEQUENCE [MRNA]</scope>
    <source>
        <tissue>Heart</tissue>
    </source>
</reference>
<reference key="2">
    <citation type="submission" date="2003-09" db="EMBL/GenBank/DDBJ databases">
        <title>Molecular cloning and expression study of estrogen receptor-related receptor beta in rat prostate.</title>
        <authorList>
            <person name="Lui K."/>
            <person name="Chen S."/>
            <person name="Chan F.L."/>
        </authorList>
    </citation>
    <scope>NUCLEOTIDE SEQUENCE [MRNA]</scope>
</reference>
<reference key="3">
    <citation type="journal article" date="1999" name="Gene">
        <title>Identification of two hERR2-related novel nuclear receptors utilizing bioinformatics and inverse PCR.</title>
        <authorList>
            <person name="Chen F."/>
            <person name="Zhang Q."/>
            <person name="McDonald T."/>
            <person name="Davidoff M.J."/>
            <person name="Bailey W."/>
            <person name="Bai C."/>
            <person name="Liu Q."/>
            <person name="Caskey C.T."/>
        </authorList>
    </citation>
    <scope>SHOWS THAT SEQUENCE DESCRIBED IN PUBMED:3267207 ORIGINATES FROM RAT</scope>
</reference>
<name>ERR2_RAT</name>
<keyword id="KW-0007">Acetylation</keyword>
<keyword id="KW-0158">Chromosome</keyword>
<keyword id="KW-0963">Cytoplasm</keyword>
<keyword id="KW-0238">DNA-binding</keyword>
<keyword id="KW-0479">Metal-binding</keyword>
<keyword id="KW-0539">Nucleus</keyword>
<keyword id="KW-0675">Receptor</keyword>
<keyword id="KW-1185">Reference proteome</keyword>
<keyword id="KW-0804">Transcription</keyword>
<keyword id="KW-0805">Transcription regulation</keyword>
<keyword id="KW-0862">Zinc</keyword>
<keyword id="KW-0863">Zinc-finger</keyword>
<sequence>MSSEDRHLGSSCGSFIKTEPSSPSSGIDALSHHSPSGSSDASGGFGMALGTHANGLDSPPMFAGAGLGGNPCRKSYEDCTSGIMEDSAIKCEYMLNAIPKRLCLVCGDIASGYHYGVASCEACKAFFKRTIQGNIEYSCPATNECEITKRRRKSCQACRFMKCLKVGMLKEGVRLDRVRGGRQKYKRRLDSENSPYLSLQISPPAKKPLTKIVSYLLVAEPDKLYAMPPDDVPEGDIKALTTLCDLADRELVFLISWAKHIPGFSNLTLGDQMSLLQSAWMEILILGIVYRSLPYDDKLAYAEDYIMDEEHSRLVGLLELYRAILQLVRRYKKLKVEKEEFVMLKALALANSDSMYIENLEAVQKLQDLLHEALQDYELSQRHEEPRRAGKLLLTLPLLRQTAAKAVQHFYSVKLQGKVPMHKLFLEMLEAKV</sequence>
<gene>
    <name evidence="10" type="primary">Esrrb</name>
    <name type="synonym">Err2</name>
    <name type="synonym">Esrl2</name>
    <name type="synonym">Nr3b2</name>
</gene>
<feature type="chain" id="PRO_0000053664" description="Steroid hormone receptor ERR2">
    <location>
        <begin position="1"/>
        <end position="433"/>
    </location>
</feature>
<feature type="domain" description="NR LBD" evidence="5">
    <location>
        <begin position="208"/>
        <end position="432"/>
    </location>
</feature>
<feature type="DNA-binding region" description="Nuclear receptor" evidence="4">
    <location>
        <begin position="100"/>
        <end position="186"/>
    </location>
</feature>
<feature type="zinc finger region" description="NR C4-type" evidence="4">
    <location>
        <begin position="103"/>
        <end position="123"/>
    </location>
</feature>
<feature type="zinc finger region" description="NR C4-type" evidence="4">
    <location>
        <begin position="139"/>
        <end position="163"/>
    </location>
</feature>
<feature type="region of interest" description="Disordered" evidence="6">
    <location>
        <begin position="1"/>
        <end position="41"/>
    </location>
</feature>
<feature type="region of interest" description="Interaction with NANOG" evidence="3">
    <location>
        <begin position="93"/>
        <end position="211"/>
    </location>
</feature>
<feature type="region of interest" description="Essential for ESRRB transcriptional activity and interaction with NCOA3" evidence="3">
    <location>
        <begin position="203"/>
        <end position="433"/>
    </location>
</feature>
<feature type="compositionally biased region" description="Low complexity" evidence="6">
    <location>
        <begin position="32"/>
        <end position="41"/>
    </location>
</feature>
<feature type="site" description="Important for stabilizing DNA-binding" evidence="1">
    <location>
        <position position="185"/>
    </location>
</feature>